<dbReference type="EC" id="5.4.2.10" evidence="1"/>
<dbReference type="EMBL" id="CP000088">
    <property type="protein sequence ID" value="AAZ56645.1"/>
    <property type="molecule type" value="Genomic_DNA"/>
</dbReference>
<dbReference type="RefSeq" id="WP_011293035.1">
    <property type="nucleotide sequence ID" value="NC_007333.1"/>
</dbReference>
<dbReference type="SMR" id="Q47LM7"/>
<dbReference type="STRING" id="269800.Tfu_2612"/>
<dbReference type="KEGG" id="tfu:Tfu_2612"/>
<dbReference type="eggNOG" id="COG1109">
    <property type="taxonomic scope" value="Bacteria"/>
</dbReference>
<dbReference type="HOGENOM" id="CLU_016950_7_0_11"/>
<dbReference type="OrthoDB" id="9803322at2"/>
<dbReference type="GO" id="GO:0005829">
    <property type="term" value="C:cytosol"/>
    <property type="evidence" value="ECO:0007669"/>
    <property type="project" value="TreeGrafter"/>
</dbReference>
<dbReference type="GO" id="GO:0000287">
    <property type="term" value="F:magnesium ion binding"/>
    <property type="evidence" value="ECO:0007669"/>
    <property type="project" value="UniProtKB-UniRule"/>
</dbReference>
<dbReference type="GO" id="GO:0008966">
    <property type="term" value="F:phosphoglucosamine mutase activity"/>
    <property type="evidence" value="ECO:0007669"/>
    <property type="project" value="UniProtKB-UniRule"/>
</dbReference>
<dbReference type="GO" id="GO:0004615">
    <property type="term" value="F:phosphomannomutase activity"/>
    <property type="evidence" value="ECO:0007669"/>
    <property type="project" value="TreeGrafter"/>
</dbReference>
<dbReference type="GO" id="GO:0005975">
    <property type="term" value="P:carbohydrate metabolic process"/>
    <property type="evidence" value="ECO:0007669"/>
    <property type="project" value="InterPro"/>
</dbReference>
<dbReference type="GO" id="GO:0009252">
    <property type="term" value="P:peptidoglycan biosynthetic process"/>
    <property type="evidence" value="ECO:0007669"/>
    <property type="project" value="TreeGrafter"/>
</dbReference>
<dbReference type="GO" id="GO:0006048">
    <property type="term" value="P:UDP-N-acetylglucosamine biosynthetic process"/>
    <property type="evidence" value="ECO:0007669"/>
    <property type="project" value="TreeGrafter"/>
</dbReference>
<dbReference type="CDD" id="cd05802">
    <property type="entry name" value="GlmM"/>
    <property type="match status" value="1"/>
</dbReference>
<dbReference type="FunFam" id="3.30.310.50:FF:000001">
    <property type="entry name" value="Phosphoglucosamine mutase"/>
    <property type="match status" value="1"/>
</dbReference>
<dbReference type="FunFam" id="3.40.120.10:FF:000001">
    <property type="entry name" value="Phosphoglucosamine mutase"/>
    <property type="match status" value="1"/>
</dbReference>
<dbReference type="FunFam" id="3.40.120.10:FF:000002">
    <property type="entry name" value="Phosphoglucosamine mutase"/>
    <property type="match status" value="1"/>
</dbReference>
<dbReference type="Gene3D" id="3.40.120.10">
    <property type="entry name" value="Alpha-D-Glucose-1,6-Bisphosphate, subunit A, domain 3"/>
    <property type="match status" value="3"/>
</dbReference>
<dbReference type="Gene3D" id="3.30.310.50">
    <property type="entry name" value="Alpha-D-phosphohexomutase, C-terminal domain"/>
    <property type="match status" value="1"/>
</dbReference>
<dbReference type="HAMAP" id="MF_01554_B">
    <property type="entry name" value="GlmM_B"/>
    <property type="match status" value="1"/>
</dbReference>
<dbReference type="InterPro" id="IPR005844">
    <property type="entry name" value="A-D-PHexomutase_a/b/a-I"/>
</dbReference>
<dbReference type="InterPro" id="IPR016055">
    <property type="entry name" value="A-D-PHexomutase_a/b/a-I/II/III"/>
</dbReference>
<dbReference type="InterPro" id="IPR005845">
    <property type="entry name" value="A-D-PHexomutase_a/b/a-II"/>
</dbReference>
<dbReference type="InterPro" id="IPR005846">
    <property type="entry name" value="A-D-PHexomutase_a/b/a-III"/>
</dbReference>
<dbReference type="InterPro" id="IPR005843">
    <property type="entry name" value="A-D-PHexomutase_C"/>
</dbReference>
<dbReference type="InterPro" id="IPR036900">
    <property type="entry name" value="A-D-PHexomutase_C_sf"/>
</dbReference>
<dbReference type="InterPro" id="IPR016066">
    <property type="entry name" value="A-D-PHexomutase_CS"/>
</dbReference>
<dbReference type="InterPro" id="IPR005841">
    <property type="entry name" value="Alpha-D-phosphohexomutase_SF"/>
</dbReference>
<dbReference type="InterPro" id="IPR006352">
    <property type="entry name" value="GlmM_bact"/>
</dbReference>
<dbReference type="InterPro" id="IPR050060">
    <property type="entry name" value="Phosphoglucosamine_mutase"/>
</dbReference>
<dbReference type="NCBIfam" id="TIGR01455">
    <property type="entry name" value="glmM"/>
    <property type="match status" value="1"/>
</dbReference>
<dbReference type="NCBIfam" id="NF008139">
    <property type="entry name" value="PRK10887.1"/>
    <property type="match status" value="1"/>
</dbReference>
<dbReference type="PANTHER" id="PTHR42946:SF1">
    <property type="entry name" value="PHOSPHOGLUCOMUTASE (ALPHA-D-GLUCOSE-1,6-BISPHOSPHATE-DEPENDENT)"/>
    <property type="match status" value="1"/>
</dbReference>
<dbReference type="PANTHER" id="PTHR42946">
    <property type="entry name" value="PHOSPHOHEXOSE MUTASE"/>
    <property type="match status" value="1"/>
</dbReference>
<dbReference type="Pfam" id="PF02878">
    <property type="entry name" value="PGM_PMM_I"/>
    <property type="match status" value="1"/>
</dbReference>
<dbReference type="Pfam" id="PF02879">
    <property type="entry name" value="PGM_PMM_II"/>
    <property type="match status" value="1"/>
</dbReference>
<dbReference type="Pfam" id="PF02880">
    <property type="entry name" value="PGM_PMM_III"/>
    <property type="match status" value="1"/>
</dbReference>
<dbReference type="Pfam" id="PF00408">
    <property type="entry name" value="PGM_PMM_IV"/>
    <property type="match status" value="1"/>
</dbReference>
<dbReference type="PRINTS" id="PR00509">
    <property type="entry name" value="PGMPMM"/>
</dbReference>
<dbReference type="SUPFAM" id="SSF55957">
    <property type="entry name" value="Phosphoglucomutase, C-terminal domain"/>
    <property type="match status" value="1"/>
</dbReference>
<dbReference type="SUPFAM" id="SSF53738">
    <property type="entry name" value="Phosphoglucomutase, first 3 domains"/>
    <property type="match status" value="3"/>
</dbReference>
<dbReference type="PROSITE" id="PS00710">
    <property type="entry name" value="PGM_PMM"/>
    <property type="match status" value="1"/>
</dbReference>
<organism>
    <name type="scientific">Thermobifida fusca (strain YX)</name>
    <dbReference type="NCBI Taxonomy" id="269800"/>
    <lineage>
        <taxon>Bacteria</taxon>
        <taxon>Bacillati</taxon>
        <taxon>Actinomycetota</taxon>
        <taxon>Actinomycetes</taxon>
        <taxon>Streptosporangiales</taxon>
        <taxon>Nocardiopsidaceae</taxon>
        <taxon>Thermobifida</taxon>
    </lineage>
</organism>
<reference key="1">
    <citation type="journal article" date="2007" name="J. Bacteriol.">
        <title>Genome sequence and analysis of the soil cellulolytic actinomycete Thermobifida fusca YX.</title>
        <authorList>
            <person name="Lykidis A."/>
            <person name="Mavromatis K."/>
            <person name="Ivanova N."/>
            <person name="Anderson I."/>
            <person name="Land M."/>
            <person name="DiBartolo G."/>
            <person name="Martinez M."/>
            <person name="Lapidus A."/>
            <person name="Lucas S."/>
            <person name="Copeland A."/>
            <person name="Richardson P."/>
            <person name="Wilson D.B."/>
            <person name="Kyrpides N."/>
        </authorList>
    </citation>
    <scope>NUCLEOTIDE SEQUENCE [LARGE SCALE GENOMIC DNA]</scope>
    <source>
        <strain>YX</strain>
    </source>
</reference>
<protein>
    <recommendedName>
        <fullName evidence="1">Phosphoglucosamine mutase</fullName>
        <ecNumber evidence="1">5.4.2.10</ecNumber>
    </recommendedName>
</protein>
<name>GLMM_THEFY</name>
<sequence>MTRLFGTDGVRGLAGRDLTAGLTLELAIAAAEVLPERGIPGKRPRAVVGRDPRASGEFLEAAVVAGLASAGVDVIRLGVLPTPAVAFLTGELDADFGVMLSASHNPAPDNGIKFFARGGHKLSDEVEDEIERRLGRAVAGATGRDVGRVTDDTDSVERYITHLVNSLPNRLDGLKVVVDCANGAAAGIAPEALRRAGADVIAIGDKPDGFNINEGCGSTNLDALRAAVLEHGADAGIAHDGDADRCQAVAADGSVVDGDQIMAVLALELYEANALHNNTLVVTVMSNLGLKLAMKEAGITLVETQVGDRYVLEAMRAGSYSLGGEQSGHIILLDHATTGDGLLTGMHLLAAVNRRGVALAELAKVMNRLPQVLVNVSGVDKTRVATSERIAAEVAAAEAELGDSGRVLLRPSGTEPIVRVMVEATSQDRAQAIADRLADVVRDELSINA</sequence>
<comment type="function">
    <text evidence="1">Catalyzes the conversion of glucosamine-6-phosphate to glucosamine-1-phosphate.</text>
</comment>
<comment type="catalytic activity">
    <reaction evidence="1">
        <text>alpha-D-glucosamine 1-phosphate = D-glucosamine 6-phosphate</text>
        <dbReference type="Rhea" id="RHEA:23424"/>
        <dbReference type="ChEBI" id="CHEBI:58516"/>
        <dbReference type="ChEBI" id="CHEBI:58725"/>
        <dbReference type="EC" id="5.4.2.10"/>
    </reaction>
</comment>
<comment type="cofactor">
    <cofactor evidence="1">
        <name>Mg(2+)</name>
        <dbReference type="ChEBI" id="CHEBI:18420"/>
    </cofactor>
    <text evidence="1">Binds 1 Mg(2+) ion per subunit.</text>
</comment>
<comment type="PTM">
    <text evidence="1">Activated by phosphorylation.</text>
</comment>
<comment type="similarity">
    <text evidence="1">Belongs to the phosphohexose mutase family.</text>
</comment>
<gene>
    <name evidence="1" type="primary">glmM</name>
    <name type="ordered locus">Tfu_2612</name>
</gene>
<accession>Q47LM7</accession>
<evidence type="ECO:0000255" key="1">
    <source>
        <dbReference type="HAMAP-Rule" id="MF_01554"/>
    </source>
</evidence>
<proteinExistence type="inferred from homology"/>
<feature type="chain" id="PRO_0000147990" description="Phosphoglucosamine mutase">
    <location>
        <begin position="1"/>
        <end position="449"/>
    </location>
</feature>
<feature type="active site" description="Phosphoserine intermediate" evidence="1">
    <location>
        <position position="103"/>
    </location>
</feature>
<feature type="binding site" description="via phosphate group" evidence="1">
    <location>
        <position position="103"/>
    </location>
    <ligand>
        <name>Mg(2+)</name>
        <dbReference type="ChEBI" id="CHEBI:18420"/>
    </ligand>
</feature>
<feature type="binding site" evidence="1">
    <location>
        <position position="240"/>
    </location>
    <ligand>
        <name>Mg(2+)</name>
        <dbReference type="ChEBI" id="CHEBI:18420"/>
    </ligand>
</feature>
<feature type="binding site" evidence="1">
    <location>
        <position position="242"/>
    </location>
    <ligand>
        <name>Mg(2+)</name>
        <dbReference type="ChEBI" id="CHEBI:18420"/>
    </ligand>
</feature>
<feature type="binding site" evidence="1">
    <location>
        <position position="244"/>
    </location>
    <ligand>
        <name>Mg(2+)</name>
        <dbReference type="ChEBI" id="CHEBI:18420"/>
    </ligand>
</feature>
<feature type="modified residue" description="Phosphoserine" evidence="1">
    <location>
        <position position="103"/>
    </location>
</feature>
<keyword id="KW-0413">Isomerase</keyword>
<keyword id="KW-0460">Magnesium</keyword>
<keyword id="KW-0479">Metal-binding</keyword>
<keyword id="KW-0597">Phosphoprotein</keyword>